<accession>A4D2B8</accession>
<accession>Q0VGD2</accession>
<accession>Q13400</accession>
<accession>Q16530</accession>
<accession>Q6NVZ2</accession>
<accession>Q7KZ90</accession>
<gene>
    <name type="primary">PMS2P1</name>
    <name type="synonym">PMS2L1</name>
    <name type="synonym">PMS2L13</name>
    <name type="synonym">PMS2L6</name>
    <name type="synonym">PMS2L8</name>
    <name type="synonym">PMS3</name>
    <name type="synonym">PMS8</name>
    <name type="synonym">PMSR2</name>
</gene>
<name>PM2P1_HUMAN</name>
<evidence type="ECO:0000256" key="1">
    <source>
        <dbReference type="SAM" id="MobiDB-lite"/>
    </source>
</evidence>
<evidence type="ECO:0000269" key="2">
    <source>
    </source>
</evidence>
<evidence type="ECO:0000303" key="3">
    <source>
    </source>
</evidence>
<evidence type="ECO:0000305" key="4"/>
<protein>
    <recommendedName>
        <fullName>Putative postmeiotic segregation increased 2-like protein 1</fullName>
    </recommendedName>
    <alternativeName>
        <fullName>PMS2-related protein 2</fullName>
    </alternativeName>
    <alternativeName>
        <fullName>Postmeiotic segregation increased 2-like protein 13</fullName>
    </alternativeName>
    <alternativeName>
        <fullName>Postmeiotic segregation increased 2-like protein 6</fullName>
    </alternativeName>
    <alternativeName>
        <fullName>Postmeiotic segregation increased 2-like protein 8</fullName>
    </alternativeName>
    <alternativeName>
        <fullName>Postmeiotic segregation increased protein 3</fullName>
        <shortName>hPMS3</shortName>
    </alternativeName>
    <alternativeName>
        <fullName>Postmeiotic segregation increased protein 8</fullName>
    </alternativeName>
    <alternativeName>
        <fullName>Putative postmeiotic segregation increased 2 pseudogene 1</fullName>
    </alternativeName>
</protein>
<feature type="chain" id="PRO_0000311098" description="Putative postmeiotic segregation increased 2-like protein 1">
    <location>
        <begin position="1"/>
        <end position="440"/>
    </location>
</feature>
<feature type="domain" description="Histidine kinase">
    <location>
        <begin position="230"/>
        <end position="364"/>
    </location>
</feature>
<feature type="region of interest" description="Disordered" evidence="1">
    <location>
        <begin position="164"/>
        <end position="215"/>
    </location>
</feature>
<feature type="compositionally biased region" description="Basic and acidic residues" evidence="1">
    <location>
        <begin position="164"/>
        <end position="178"/>
    </location>
</feature>
<feature type="splice variant" id="VSP_029389" description="In isoform 2." evidence="3">
    <original>KRACFPFAFCRDCQFPEASPAMLPVQPAELTPR</original>
    <variation>PPIYSLKHVRGGPELLCKWTHCPEATMLQGSPS</variation>
    <location>
        <begin position="380"/>
        <end position="412"/>
    </location>
</feature>
<feature type="splice variant" id="VSP_038329" description="In isoform 3." evidence="3">
    <original>KR</original>
    <variation>DS</variation>
    <location>
        <begin position="380"/>
        <end position="381"/>
    </location>
</feature>
<feature type="splice variant" id="VSP_038330" description="In isoform 3." evidence="3">
    <location>
        <begin position="382"/>
        <end position="440"/>
    </location>
</feature>
<feature type="splice variant" id="VSP_029390" description="In isoform 2." evidence="3">
    <location>
        <begin position="413"/>
        <end position="440"/>
    </location>
</feature>
<feature type="sequence conflict" description="In Ref. 5; BC067809." evidence="4" ref="5">
    <original>E</original>
    <variation>G</variation>
    <location>
        <position position="175"/>
    </location>
</feature>
<organism>
    <name type="scientific">Homo sapiens</name>
    <name type="common">Human</name>
    <dbReference type="NCBI Taxonomy" id="9606"/>
    <lineage>
        <taxon>Eukaryota</taxon>
        <taxon>Metazoa</taxon>
        <taxon>Chordata</taxon>
        <taxon>Craniata</taxon>
        <taxon>Vertebrata</taxon>
        <taxon>Euteleostomi</taxon>
        <taxon>Mammalia</taxon>
        <taxon>Eutheria</taxon>
        <taxon>Euarchontoglires</taxon>
        <taxon>Primates</taxon>
        <taxon>Haplorrhini</taxon>
        <taxon>Catarrhini</taxon>
        <taxon>Hominidae</taxon>
        <taxon>Homo</taxon>
    </lineage>
</organism>
<sequence>MVTMCGGHRPENFLHQVLTEFGEELAGEGKSEVGGGAPRSYLQVASAECWAAAPAVHVGEPVHAGGLHTERGADPVIGLYLVHRGGACQTPTVGNRQTPTLGIHARPRRRATTSLLTLLLAFGKNAVRCALIGPGSLTSRTRPLTEPLGEKERREVFFPPRPERVEHNVESSRWEPRRRGACGSRGGNFPSPRGGSGVASLERAESSSTEPAKAIKPIDRKSVHQICSGPVVPSLSTAVKELVENSLDAGATNIDLKLKDYGVDLIEVSGNGCGVEEENFEGLTLKHHTSKIQEFADLPQVETFGFRGEALSSLCALSDVTISTCHVSAKVGTRLVFDHYGKIIQKTPYPHPRGMTVSVKQLFSTLPVHHKEFQRNIKKKRACFPFAFCRDCQFPEASPAMLPVQPAELTPRSTPPHPCSLEDNVITVFSSVKNGPGSSR</sequence>
<comment type="alternative products">
    <event type="alternative splicing"/>
    <isoform>
        <id>A4D2B8-1</id>
        <name>1</name>
        <sequence type="displayed"/>
    </isoform>
    <isoform>
        <id>A4D2B8-2</id>
        <name>2</name>
        <sequence type="described" ref="VSP_029389 VSP_029390"/>
    </isoform>
    <isoform>
        <id>A4D2B8-3</id>
        <name>3</name>
        <sequence type="described" ref="VSP_038329 VSP_038330"/>
    </isoform>
</comment>
<comment type="tissue specificity">
    <text evidence="2">Highly expressed in kidney, spleen, adrenal gland, ovary and cerebellum and to a lower extent in liver, esophagus, stomach, duodenum, colon, bladder, uterus, lung, pancreas and cerebrum. Not expressed in heart.</text>
</comment>
<comment type="miscellaneous">
    <text>Encoded by one of the numerous copies of postmeiotic segregation increased 2-like genes scattered in the q11-q22 region of the chromosome 7.</text>
</comment>
<comment type="similarity">
    <text evidence="4">Belongs to the DNA mismatch repair MutL/HexB family.</text>
</comment>
<comment type="caution">
    <text evidence="4">Could be the product of a pseudogene.</text>
</comment>
<comment type="sequence caution" evidence="4">
    <conflict type="erroneous gene model prediction">
        <sequence resource="EMBL-CDS" id="AAA97458"/>
    </conflict>
</comment>
<comment type="sequence caution" evidence="4">
    <conflict type="miscellaneous discrepancy">
        <sequence resource="EMBL-CDS" id="AAA97458"/>
    </conflict>
    <text>Several conflicts but it is uncertain if it is due to sequencing errors or if this sequence is another copy of this gene.</text>
</comment>
<proteinExistence type="uncertain"/>
<reference key="1">
    <citation type="journal article" date="1995" name="Genomics">
        <title>Genomic organization of the human PMS2 gene family.</title>
        <authorList>
            <person name="Nicolaides N.C."/>
            <person name="Carter K.C."/>
            <person name="Shell B.K."/>
            <person name="Papadopoulos N."/>
            <person name="Vogelstein B."/>
            <person name="Kinzler K.W."/>
        </authorList>
    </citation>
    <scope>NUCLEOTIDE SEQUENCE [GENOMIC DNA]</scope>
    <source>
        <tissue>Small intestine</tissue>
    </source>
</reference>
<reference key="2">
    <citation type="journal article" date="2003" name="Science">
        <title>Human chromosome 7: DNA sequence and biology.</title>
        <authorList>
            <person name="Scherer S.W."/>
            <person name="Cheung J."/>
            <person name="MacDonald J.R."/>
            <person name="Osborne L.R."/>
            <person name="Nakabayashi K."/>
            <person name="Herbrick J.-A."/>
            <person name="Carson A.R."/>
            <person name="Parker-Katiraee L."/>
            <person name="Skaug J."/>
            <person name="Khaja R."/>
            <person name="Zhang J."/>
            <person name="Hudek A.K."/>
            <person name="Li M."/>
            <person name="Haddad M."/>
            <person name="Duggan G.E."/>
            <person name="Fernandez B.A."/>
            <person name="Kanematsu E."/>
            <person name="Gentles S."/>
            <person name="Christopoulos C.C."/>
            <person name="Choufani S."/>
            <person name="Kwasnicka D."/>
            <person name="Zheng X.H."/>
            <person name="Lai Z."/>
            <person name="Nusskern D.R."/>
            <person name="Zhang Q."/>
            <person name="Gu Z."/>
            <person name="Lu F."/>
            <person name="Zeesman S."/>
            <person name="Nowaczyk M.J."/>
            <person name="Teshima I."/>
            <person name="Chitayat D."/>
            <person name="Shuman C."/>
            <person name="Weksberg R."/>
            <person name="Zackai E.H."/>
            <person name="Grebe T.A."/>
            <person name="Cox S.R."/>
            <person name="Kirkpatrick S.J."/>
            <person name="Rahman N."/>
            <person name="Friedman J.M."/>
            <person name="Heng H.H.Q."/>
            <person name="Pelicci P.G."/>
            <person name="Lo-Coco F."/>
            <person name="Belloni E."/>
            <person name="Shaffer L.G."/>
            <person name="Pober B."/>
            <person name="Morton C.C."/>
            <person name="Gusella J.F."/>
            <person name="Bruns G.A.P."/>
            <person name="Korf B.R."/>
            <person name="Quade B.J."/>
            <person name="Ligon A.H."/>
            <person name="Ferguson H."/>
            <person name="Higgins A.W."/>
            <person name="Leach N.T."/>
            <person name="Herrick S.R."/>
            <person name="Lemyre E."/>
            <person name="Farra C.G."/>
            <person name="Kim H.-G."/>
            <person name="Summers A.M."/>
            <person name="Gripp K.W."/>
            <person name="Roberts W."/>
            <person name="Szatmari P."/>
            <person name="Winsor E.J.T."/>
            <person name="Grzeschik K.-H."/>
            <person name="Teebi A."/>
            <person name="Minassian B.A."/>
            <person name="Kere J."/>
            <person name="Armengol L."/>
            <person name="Pujana M.A."/>
            <person name="Estivill X."/>
            <person name="Wilson M.D."/>
            <person name="Koop B.F."/>
            <person name="Tosi S."/>
            <person name="Moore G.E."/>
            <person name="Boright A.P."/>
            <person name="Zlotorynski E."/>
            <person name="Kerem B."/>
            <person name="Kroisel P.M."/>
            <person name="Petek E."/>
            <person name="Oscier D.G."/>
            <person name="Mould S.J."/>
            <person name="Doehner H."/>
            <person name="Doehner K."/>
            <person name="Rommens J.M."/>
            <person name="Vincent J.B."/>
            <person name="Venter J.C."/>
            <person name="Li P.W."/>
            <person name="Mural R.J."/>
            <person name="Adams M.D."/>
            <person name="Tsui L.-C."/>
        </authorList>
    </citation>
    <scope>NUCLEOTIDE SEQUENCE [LARGE SCALE GENOMIC DNA]</scope>
</reference>
<reference key="3">
    <citation type="journal article" date="1999" name="J. Biochem.">
        <title>The human PMS2L proteins do not interact with hMLH1, a major DNA mismatch repair protein.</title>
        <authorList>
            <person name="Kondo E."/>
            <person name="Horii A."/>
            <person name="Fukushige S."/>
        </authorList>
    </citation>
    <scope>NUCLEOTIDE SEQUENCE [MRNA] OF 52-440 (ISOFORM 1)</scope>
    <scope>TISSUE SPECIFICITY</scope>
    <source>
        <tissue>Fetal brain</tissue>
    </source>
</reference>
<reference key="4">
    <citation type="submission" date="2005-09" db="EMBL/GenBank/DDBJ databases">
        <authorList>
            <person name="Mural R.J."/>
            <person name="Istrail S."/>
            <person name="Sutton G.G."/>
            <person name="Florea L."/>
            <person name="Halpern A.L."/>
            <person name="Mobarry C.M."/>
            <person name="Lippert R."/>
            <person name="Walenz B."/>
            <person name="Shatkay H."/>
            <person name="Dew I."/>
            <person name="Miller J.R."/>
            <person name="Flanigan M.J."/>
            <person name="Edwards N.J."/>
            <person name="Bolanos R."/>
            <person name="Fasulo D."/>
            <person name="Halldorsson B.V."/>
            <person name="Hannenhalli S."/>
            <person name="Turner R."/>
            <person name="Yooseph S."/>
            <person name="Lu F."/>
            <person name="Nusskern D.R."/>
            <person name="Shue B.C."/>
            <person name="Zheng X.H."/>
            <person name="Zhong F."/>
            <person name="Delcher A.L."/>
            <person name="Huson D.H."/>
            <person name="Kravitz S.A."/>
            <person name="Mouchard L."/>
            <person name="Reinert K."/>
            <person name="Remington K.A."/>
            <person name="Clark A.G."/>
            <person name="Waterman M.S."/>
            <person name="Eichler E.E."/>
            <person name="Adams M.D."/>
            <person name="Hunkapiller M.W."/>
            <person name="Myers E.W."/>
            <person name="Venter J.C."/>
        </authorList>
    </citation>
    <scope>NUCLEOTIDE SEQUENCE [LARGE SCALE GENOMIC DNA] OF 52-440</scope>
</reference>
<reference key="5">
    <citation type="journal article" date="2004" name="Genome Res.">
        <title>The status, quality, and expansion of the NIH full-length cDNA project: the Mammalian Gene Collection (MGC).</title>
        <authorList>
            <consortium name="The MGC Project Team"/>
        </authorList>
    </citation>
    <scope>NUCLEOTIDE SEQUENCE [LARGE SCALE MRNA] OF 175-440 (ISOFORM 3)</scope>
    <scope>NUCLEOTIDE SEQUENCE [LARGE SCALE MRNA] OF 183-440 (ISOFORM 2)</scope>
    <source>
        <tissue>Blood</tissue>
        <tissue>Brain</tissue>
    </source>
</reference>
<reference key="6">
    <citation type="journal article" date="1994" name="Biochem. Biophys. Res. Commun.">
        <title>Cloning, characterization and chromosomal assignment of the human genes homologous to yeast PMS1, a member of mismatch repair genes.</title>
        <authorList>
            <person name="Horii A."/>
            <person name="Han H.J."/>
            <person name="Sasaki S."/>
            <person name="Shimada M."/>
            <person name="Nakamura Y."/>
        </authorList>
    </citation>
    <scope>NUCLEOTIDE SEQUENCE [MRNA] OF 185-440 (ISOFORM 1)</scope>
    <source>
        <tissue>Brain</tissue>
    </source>
</reference>
<keyword id="KW-0025">Alternative splicing</keyword>
<keyword id="KW-0418">Kinase</keyword>
<keyword id="KW-1185">Reference proteome</keyword>
<keyword id="KW-0808">Transferase</keyword>
<dbReference type="EMBL" id="U38964">
    <property type="protein sequence ID" value="AAA97458.1"/>
    <property type="status" value="ALT_SEQ"/>
    <property type="molecule type" value="Genomic_DNA"/>
</dbReference>
<dbReference type="EMBL" id="CH236956">
    <property type="protein sequence ID" value="EAL23838.1"/>
    <property type="molecule type" value="Genomic_DNA"/>
</dbReference>
<dbReference type="EMBL" id="AB017004">
    <property type="protein sequence ID" value="BAA74753.1"/>
    <property type="molecule type" value="mRNA"/>
</dbReference>
<dbReference type="EMBL" id="CH471091">
    <property type="protein sequence ID" value="EAW76560.1"/>
    <property type="molecule type" value="Genomic_DNA"/>
</dbReference>
<dbReference type="EMBL" id="BC067809">
    <property type="status" value="NOT_ANNOTATED_CDS"/>
    <property type="molecule type" value="mRNA"/>
</dbReference>
<dbReference type="EMBL" id="BC110395">
    <property type="status" value="NOT_ANNOTATED_CDS"/>
    <property type="molecule type" value="mRNA"/>
</dbReference>
<dbReference type="EMBL" id="D38435">
    <property type="protein sequence ID" value="BAA07470.1"/>
    <property type="molecule type" value="mRNA"/>
</dbReference>
<dbReference type="EMBL" id="D38499">
    <property type="protein sequence ID" value="BAA07511.1"/>
    <property type="molecule type" value="mRNA"/>
</dbReference>
<dbReference type="PIR" id="JC2398">
    <property type="entry name" value="JC2398"/>
</dbReference>
<dbReference type="PIR" id="JC2399">
    <property type="entry name" value="JC2399"/>
</dbReference>
<dbReference type="SMR" id="A4D2B8"/>
<dbReference type="iPTMnet" id="A4D2B8"/>
<dbReference type="PhosphoSitePlus" id="A4D2B8"/>
<dbReference type="BioMuta" id="HGNC:9123"/>
<dbReference type="jPOST" id="A4D2B8"/>
<dbReference type="MassIVE" id="A4D2B8"/>
<dbReference type="PeptideAtlas" id="A4D2B8"/>
<dbReference type="ProteomicsDB" id="643">
    <molecule id="A4D2B8-1"/>
</dbReference>
<dbReference type="ProteomicsDB" id="644">
    <molecule id="A4D2B8-2"/>
</dbReference>
<dbReference type="ProteomicsDB" id="645">
    <molecule id="A4D2B8-3"/>
</dbReference>
<dbReference type="AGR" id="HGNC:9123"/>
<dbReference type="GeneCards" id="PMS2P1"/>
<dbReference type="HGNC" id="HGNC:9123">
    <property type="gene designation" value="PMS2P1"/>
</dbReference>
<dbReference type="MIM" id="605038">
    <property type="type" value="gene"/>
</dbReference>
<dbReference type="neXtProt" id="NX_A4D2B8"/>
<dbReference type="InParanoid" id="A4D2B8"/>
<dbReference type="PAN-GO" id="A4D2B8">
    <property type="GO annotations" value="4 GO annotations based on evolutionary models"/>
</dbReference>
<dbReference type="PhylomeDB" id="A4D2B8"/>
<dbReference type="ChiTaRS" id="PMS2P1">
    <property type="organism name" value="human"/>
</dbReference>
<dbReference type="Pharos" id="A4D2B8">
    <property type="development level" value="Tdark"/>
</dbReference>
<dbReference type="PRO" id="PR:A4D2B8"/>
<dbReference type="Proteomes" id="UP000005640">
    <property type="component" value="Unplaced"/>
</dbReference>
<dbReference type="RNAct" id="A4D2B8">
    <property type="molecule type" value="protein"/>
</dbReference>
<dbReference type="GO" id="GO:0032300">
    <property type="term" value="C:mismatch repair complex"/>
    <property type="evidence" value="ECO:0007669"/>
    <property type="project" value="InterPro"/>
</dbReference>
<dbReference type="GO" id="GO:0016887">
    <property type="term" value="F:ATP hydrolysis activity"/>
    <property type="evidence" value="ECO:0007669"/>
    <property type="project" value="InterPro"/>
</dbReference>
<dbReference type="GO" id="GO:0140664">
    <property type="term" value="F:ATP-dependent DNA damage sensor activity"/>
    <property type="evidence" value="ECO:0007669"/>
    <property type="project" value="InterPro"/>
</dbReference>
<dbReference type="GO" id="GO:0016301">
    <property type="term" value="F:kinase activity"/>
    <property type="evidence" value="ECO:0007669"/>
    <property type="project" value="UniProtKB-KW"/>
</dbReference>
<dbReference type="GO" id="GO:0006298">
    <property type="term" value="P:mismatch repair"/>
    <property type="evidence" value="ECO:0007669"/>
    <property type="project" value="InterPro"/>
</dbReference>
<dbReference type="CDD" id="cd16926">
    <property type="entry name" value="HATPase_MutL-MLH-PMS-like"/>
    <property type="match status" value="1"/>
</dbReference>
<dbReference type="FunFam" id="3.30.565.10:FF:000313">
    <property type="entry name" value="Putative postmeiotic segregation increased 2-like protein 1"/>
    <property type="match status" value="1"/>
</dbReference>
<dbReference type="Gene3D" id="3.30.565.10">
    <property type="entry name" value="Histidine kinase-like ATPase, C-terminal domain"/>
    <property type="match status" value="1"/>
</dbReference>
<dbReference type="InterPro" id="IPR014762">
    <property type="entry name" value="DNA_mismatch_repair_CS"/>
</dbReference>
<dbReference type="InterPro" id="IPR036890">
    <property type="entry name" value="HATPase_C_sf"/>
</dbReference>
<dbReference type="InterPro" id="IPR038973">
    <property type="entry name" value="MutL/Mlh/Pms-like"/>
</dbReference>
<dbReference type="PANTHER" id="PTHR10073">
    <property type="entry name" value="DNA MISMATCH REPAIR PROTEIN MLH, PMS, MUTL"/>
    <property type="match status" value="1"/>
</dbReference>
<dbReference type="PANTHER" id="PTHR10073:SF52">
    <property type="entry name" value="MISMATCH REPAIR ENDONUCLEASE PMS2"/>
    <property type="match status" value="1"/>
</dbReference>
<dbReference type="Pfam" id="PF13589">
    <property type="entry name" value="HATPase_c_3"/>
    <property type="match status" value="1"/>
</dbReference>
<dbReference type="SUPFAM" id="SSF55874">
    <property type="entry name" value="ATPase domain of HSP90 chaperone/DNA topoisomerase II/histidine kinase"/>
    <property type="match status" value="1"/>
</dbReference>
<dbReference type="PROSITE" id="PS00058">
    <property type="entry name" value="DNA_MISMATCH_REPAIR_1"/>
    <property type="match status" value="1"/>
</dbReference>